<gene>
    <name evidence="1" type="primary">ispG</name>
    <name type="ordered locus">Acid_1193</name>
</gene>
<reference key="1">
    <citation type="journal article" date="2009" name="Appl. Environ. Microbiol.">
        <title>Three genomes from the phylum Acidobacteria provide insight into the lifestyles of these microorganisms in soils.</title>
        <authorList>
            <person name="Ward N.L."/>
            <person name="Challacombe J.F."/>
            <person name="Janssen P.H."/>
            <person name="Henrissat B."/>
            <person name="Coutinho P.M."/>
            <person name="Wu M."/>
            <person name="Xie G."/>
            <person name="Haft D.H."/>
            <person name="Sait M."/>
            <person name="Badger J."/>
            <person name="Barabote R.D."/>
            <person name="Bradley B."/>
            <person name="Brettin T.S."/>
            <person name="Brinkac L.M."/>
            <person name="Bruce D."/>
            <person name="Creasy T."/>
            <person name="Daugherty S.C."/>
            <person name="Davidsen T.M."/>
            <person name="DeBoy R.T."/>
            <person name="Detter J.C."/>
            <person name="Dodson R.J."/>
            <person name="Durkin A.S."/>
            <person name="Ganapathy A."/>
            <person name="Gwinn-Giglio M."/>
            <person name="Han C.S."/>
            <person name="Khouri H."/>
            <person name="Kiss H."/>
            <person name="Kothari S.P."/>
            <person name="Madupu R."/>
            <person name="Nelson K.E."/>
            <person name="Nelson W.C."/>
            <person name="Paulsen I."/>
            <person name="Penn K."/>
            <person name="Ren Q."/>
            <person name="Rosovitz M.J."/>
            <person name="Selengut J.D."/>
            <person name="Shrivastava S."/>
            <person name="Sullivan S.A."/>
            <person name="Tapia R."/>
            <person name="Thompson L.S."/>
            <person name="Watkins K.L."/>
            <person name="Yang Q."/>
            <person name="Yu C."/>
            <person name="Zafar N."/>
            <person name="Zhou L."/>
            <person name="Kuske C.R."/>
        </authorList>
    </citation>
    <scope>NUCLEOTIDE SEQUENCE [LARGE SCALE GENOMIC DNA]</scope>
    <source>
        <strain>Ellin6076</strain>
    </source>
</reference>
<feature type="chain" id="PRO_1000123460" description="4-hydroxy-3-methylbut-2-en-1-yl diphosphate synthase (flavodoxin)">
    <location>
        <begin position="1"/>
        <end position="415"/>
    </location>
</feature>
<feature type="binding site" evidence="1">
    <location>
        <position position="298"/>
    </location>
    <ligand>
        <name>[4Fe-4S] cluster</name>
        <dbReference type="ChEBI" id="CHEBI:49883"/>
    </ligand>
</feature>
<feature type="binding site" evidence="1">
    <location>
        <position position="301"/>
    </location>
    <ligand>
        <name>[4Fe-4S] cluster</name>
        <dbReference type="ChEBI" id="CHEBI:49883"/>
    </ligand>
</feature>
<feature type="binding site" evidence="1">
    <location>
        <position position="344"/>
    </location>
    <ligand>
        <name>[4Fe-4S] cluster</name>
        <dbReference type="ChEBI" id="CHEBI:49883"/>
    </ligand>
</feature>
<feature type="binding site" evidence="1">
    <location>
        <position position="351"/>
    </location>
    <ligand>
        <name>[4Fe-4S] cluster</name>
        <dbReference type="ChEBI" id="CHEBI:49883"/>
    </ligand>
</feature>
<dbReference type="EC" id="1.17.7.3" evidence="1"/>
<dbReference type="EMBL" id="CP000473">
    <property type="protein sequence ID" value="ABJ82187.1"/>
    <property type="molecule type" value="Genomic_DNA"/>
</dbReference>
<dbReference type="SMR" id="Q029T9"/>
<dbReference type="FunCoup" id="Q029T9">
    <property type="interactions" value="352"/>
</dbReference>
<dbReference type="STRING" id="234267.Acid_1193"/>
<dbReference type="KEGG" id="sus:Acid_1193"/>
<dbReference type="eggNOG" id="COG0821">
    <property type="taxonomic scope" value="Bacteria"/>
</dbReference>
<dbReference type="HOGENOM" id="CLU_042258_1_0_0"/>
<dbReference type="InParanoid" id="Q029T9"/>
<dbReference type="OrthoDB" id="9803214at2"/>
<dbReference type="UniPathway" id="UPA00056">
    <property type="reaction ID" value="UER00096"/>
</dbReference>
<dbReference type="GO" id="GO:0051539">
    <property type="term" value="F:4 iron, 4 sulfur cluster binding"/>
    <property type="evidence" value="ECO:0007669"/>
    <property type="project" value="UniProtKB-UniRule"/>
</dbReference>
<dbReference type="GO" id="GO:0046429">
    <property type="term" value="F:4-hydroxy-3-methylbut-2-en-1-yl diphosphate synthase activity (ferredoxin)"/>
    <property type="evidence" value="ECO:0007669"/>
    <property type="project" value="UniProtKB-UniRule"/>
</dbReference>
<dbReference type="GO" id="GO:0141197">
    <property type="term" value="F:4-hydroxy-3-methylbut-2-enyl-diphosphate synthase activity (flavodoxin)"/>
    <property type="evidence" value="ECO:0007669"/>
    <property type="project" value="UniProtKB-EC"/>
</dbReference>
<dbReference type="GO" id="GO:0005506">
    <property type="term" value="F:iron ion binding"/>
    <property type="evidence" value="ECO:0007669"/>
    <property type="project" value="InterPro"/>
</dbReference>
<dbReference type="GO" id="GO:0019288">
    <property type="term" value="P:isopentenyl diphosphate biosynthetic process, methylerythritol 4-phosphate pathway"/>
    <property type="evidence" value="ECO:0007669"/>
    <property type="project" value="UniProtKB-UniRule"/>
</dbReference>
<dbReference type="GO" id="GO:0016114">
    <property type="term" value="P:terpenoid biosynthetic process"/>
    <property type="evidence" value="ECO:0007669"/>
    <property type="project" value="InterPro"/>
</dbReference>
<dbReference type="FunFam" id="3.30.413.10:FF:000012">
    <property type="entry name" value="4-hydroxy-3-methylbut-2-en-1-yl diphosphate synthase (flavodoxin)"/>
    <property type="match status" value="1"/>
</dbReference>
<dbReference type="Gene3D" id="3.20.20.20">
    <property type="entry name" value="Dihydropteroate synthase-like"/>
    <property type="match status" value="1"/>
</dbReference>
<dbReference type="Gene3D" id="3.30.413.10">
    <property type="entry name" value="Sulfite Reductase Hemoprotein, domain 1"/>
    <property type="match status" value="1"/>
</dbReference>
<dbReference type="HAMAP" id="MF_00159">
    <property type="entry name" value="IspG"/>
    <property type="match status" value="1"/>
</dbReference>
<dbReference type="InterPro" id="IPR011005">
    <property type="entry name" value="Dihydropteroate_synth-like_sf"/>
</dbReference>
<dbReference type="InterPro" id="IPR016425">
    <property type="entry name" value="IspG_bac"/>
</dbReference>
<dbReference type="InterPro" id="IPR004588">
    <property type="entry name" value="IspG_bac-typ"/>
</dbReference>
<dbReference type="InterPro" id="IPR045854">
    <property type="entry name" value="NO2/SO3_Rdtase_4Fe4S_sf"/>
</dbReference>
<dbReference type="NCBIfam" id="TIGR00612">
    <property type="entry name" value="ispG_gcpE"/>
    <property type="match status" value="1"/>
</dbReference>
<dbReference type="NCBIfam" id="NF001540">
    <property type="entry name" value="PRK00366.1"/>
    <property type="match status" value="1"/>
</dbReference>
<dbReference type="PANTHER" id="PTHR30454">
    <property type="entry name" value="4-HYDROXY-3-METHYLBUT-2-EN-1-YL DIPHOSPHATE SYNTHASE"/>
    <property type="match status" value="1"/>
</dbReference>
<dbReference type="PANTHER" id="PTHR30454:SF0">
    <property type="entry name" value="4-HYDROXY-3-METHYLBUT-2-EN-1-YL DIPHOSPHATE SYNTHASE (FERREDOXIN), CHLOROPLASTIC"/>
    <property type="match status" value="1"/>
</dbReference>
<dbReference type="Pfam" id="PF04551">
    <property type="entry name" value="GcpE"/>
    <property type="match status" value="1"/>
</dbReference>
<dbReference type="PIRSF" id="PIRSF004640">
    <property type="entry name" value="IspG"/>
    <property type="match status" value="1"/>
</dbReference>
<dbReference type="SUPFAM" id="SSF56014">
    <property type="entry name" value="Nitrite and sulphite reductase 4Fe-4S domain-like"/>
    <property type="match status" value="1"/>
</dbReference>
<accession>Q029T9</accession>
<evidence type="ECO:0000255" key="1">
    <source>
        <dbReference type="HAMAP-Rule" id="MF_00159"/>
    </source>
</evidence>
<comment type="function">
    <text evidence="1">Converts 2C-methyl-D-erythritol 2,4-cyclodiphosphate (ME-2,4cPP) into 1-hydroxy-2-methyl-2-(E)-butenyl 4-diphosphate.</text>
</comment>
<comment type="catalytic activity">
    <reaction evidence="1">
        <text>(2E)-4-hydroxy-3-methylbut-2-enyl diphosphate + oxidized [flavodoxin] + H2O + 2 H(+) = 2-C-methyl-D-erythritol 2,4-cyclic diphosphate + reduced [flavodoxin]</text>
        <dbReference type="Rhea" id="RHEA:43604"/>
        <dbReference type="Rhea" id="RHEA-COMP:10622"/>
        <dbReference type="Rhea" id="RHEA-COMP:10623"/>
        <dbReference type="ChEBI" id="CHEBI:15377"/>
        <dbReference type="ChEBI" id="CHEBI:15378"/>
        <dbReference type="ChEBI" id="CHEBI:57618"/>
        <dbReference type="ChEBI" id="CHEBI:58210"/>
        <dbReference type="ChEBI" id="CHEBI:58483"/>
        <dbReference type="ChEBI" id="CHEBI:128753"/>
        <dbReference type="EC" id="1.17.7.3"/>
    </reaction>
</comment>
<comment type="cofactor">
    <cofactor evidence="1">
        <name>[4Fe-4S] cluster</name>
        <dbReference type="ChEBI" id="CHEBI:49883"/>
    </cofactor>
    <text evidence="1">Binds 1 [4Fe-4S] cluster.</text>
</comment>
<comment type="pathway">
    <text evidence="1">Isoprenoid biosynthesis; isopentenyl diphosphate biosynthesis via DXP pathway; isopentenyl diphosphate from 1-deoxy-D-xylulose 5-phosphate: step 5/6.</text>
</comment>
<comment type="similarity">
    <text evidence="1">Belongs to the IspG family.</text>
</comment>
<sequence>MAVKPRRNAVVVDVGGVKVGGTHPIVVQSMTNTDTADVASTVNQVMALARAGSELVRVTVNTEAAAAAVPKIVDACAAFGVRVPIIGDFHYNGHLLLKKYPECARALAKYRINPGNSDIGRKTDDNFRTMIEVAIENRKPVRIGVNWGSLDSALLTRMMDENSLLPEPKDAREVTLDAMVASAVQSARAAERHGLAHDQIILSAKVSGVQDLIDVYRALAAVCDYPLHLGLTEAGLGSKGIVATTAALAPVLQDGIGDTIRTSLTPMPNGDRTEEVIVSQQILQSLGIRSFTPQVTACPGCGRTTSTFFQEMADEIQTYLRVQMPSWKATHPGVETMKVAVMGCVVNGPGESKHSNIGISLPGTFEEPKAPVYVDGRLMTTLKGDRIVAEFLEILNEYVDTHYAIAGEPELVSGD</sequence>
<proteinExistence type="inferred from homology"/>
<organism>
    <name type="scientific">Solibacter usitatus (strain Ellin6076)</name>
    <dbReference type="NCBI Taxonomy" id="234267"/>
    <lineage>
        <taxon>Bacteria</taxon>
        <taxon>Pseudomonadati</taxon>
        <taxon>Acidobacteriota</taxon>
        <taxon>Terriglobia</taxon>
        <taxon>Bryobacterales</taxon>
        <taxon>Solibacteraceae</taxon>
        <taxon>Candidatus Solibacter</taxon>
    </lineage>
</organism>
<name>ISPG_SOLUE</name>
<keyword id="KW-0004">4Fe-4S</keyword>
<keyword id="KW-0408">Iron</keyword>
<keyword id="KW-0411">Iron-sulfur</keyword>
<keyword id="KW-0414">Isoprene biosynthesis</keyword>
<keyword id="KW-0479">Metal-binding</keyword>
<keyword id="KW-0560">Oxidoreductase</keyword>
<protein>
    <recommendedName>
        <fullName evidence="1">4-hydroxy-3-methylbut-2-en-1-yl diphosphate synthase (flavodoxin)</fullName>
        <ecNumber evidence="1">1.17.7.3</ecNumber>
    </recommendedName>
    <alternativeName>
        <fullName evidence="1">1-hydroxy-2-methyl-2-(E)-butenyl 4-diphosphate synthase</fullName>
    </alternativeName>
</protein>